<accession>A4ICE5</accession>
<evidence type="ECO:0000255" key="1">
    <source>
        <dbReference type="HAMAP-Rule" id="MF_03119"/>
    </source>
</evidence>
<keyword id="KW-0028">Amino-acid biosynthesis</keyword>
<keyword id="KW-0963">Cytoplasm</keyword>
<keyword id="KW-0413">Isomerase</keyword>
<keyword id="KW-0486">Methionine biosynthesis</keyword>
<keyword id="KW-0539">Nucleus</keyword>
<keyword id="KW-1185">Reference proteome</keyword>
<sequence length="375" mass="40372">MMSKPHHATLESIKYTPGSLRLLDQRKLPLETVFDDVLTVEDIWSAINEMRVRGAPAIAVSAALGIAVATQRKVANGELKSGSEVQAFFLSSCDFVMTSRPTAVNLFNCLRDLKEQVEKLDPTKAAAEVAQACVELAEAVYTKDVAFNEGIMRHGAAHILAVAKAEGRDKVSILTICNTGALATSRYGTALGVVRQLFYDGKLERVYACETRPWNQGARLTVYECVQEGIPCTLICDGAASSLMLNRKIDAVVVGADRICQNGDTANKIGTYNLAVSAKFHGVKLYVAAPSTTLDAKTASGNRVEIEEREPTEITTNMVTKQRVVADGPHLSVWNPVFDITPGELITGGIITEKGVQAPTASAPYYDIASIIAQP</sequence>
<dbReference type="EC" id="5.3.1.23" evidence="1"/>
<dbReference type="EMBL" id="FR796468">
    <property type="protein sequence ID" value="CAM72523.1"/>
    <property type="molecule type" value="Genomic_DNA"/>
</dbReference>
<dbReference type="RefSeq" id="XP_001469414.1">
    <property type="nucleotide sequence ID" value="XM_001469377.1"/>
</dbReference>
<dbReference type="SMR" id="A4ICE5"/>
<dbReference type="FunCoup" id="A4ICE5">
    <property type="interactions" value="178"/>
</dbReference>
<dbReference type="STRING" id="5671.A4ICE5"/>
<dbReference type="GeneID" id="5073515"/>
<dbReference type="KEGG" id="lif:LINJ_36_5160"/>
<dbReference type="eggNOG" id="KOG1468">
    <property type="taxonomic scope" value="Eukaryota"/>
</dbReference>
<dbReference type="InParanoid" id="A4ICE5"/>
<dbReference type="OMA" id="CETRPLN"/>
<dbReference type="UniPathway" id="UPA00904">
    <property type="reaction ID" value="UER00874"/>
</dbReference>
<dbReference type="Proteomes" id="UP000008153">
    <property type="component" value="Chromosome 36"/>
</dbReference>
<dbReference type="GO" id="GO:0005737">
    <property type="term" value="C:cytoplasm"/>
    <property type="evidence" value="ECO:0007669"/>
    <property type="project" value="UniProtKB-SubCell"/>
</dbReference>
<dbReference type="GO" id="GO:0005634">
    <property type="term" value="C:nucleus"/>
    <property type="evidence" value="ECO:0007669"/>
    <property type="project" value="UniProtKB-SubCell"/>
</dbReference>
<dbReference type="GO" id="GO:0046523">
    <property type="term" value="F:S-methyl-5-thioribose-1-phosphate isomerase activity"/>
    <property type="evidence" value="ECO:0007669"/>
    <property type="project" value="UniProtKB-UniRule"/>
</dbReference>
<dbReference type="GO" id="GO:0019509">
    <property type="term" value="P:L-methionine salvage from methylthioadenosine"/>
    <property type="evidence" value="ECO:0007669"/>
    <property type="project" value="UniProtKB-UniRule"/>
</dbReference>
<dbReference type="FunFam" id="1.20.120.420:FF:000001">
    <property type="entry name" value="Methylthioribose-1-phosphate isomerase"/>
    <property type="match status" value="1"/>
</dbReference>
<dbReference type="FunFam" id="3.40.50.10470:FF:000006">
    <property type="entry name" value="Methylthioribose-1-phosphate isomerase"/>
    <property type="match status" value="1"/>
</dbReference>
<dbReference type="Gene3D" id="1.20.120.420">
    <property type="entry name" value="translation initiation factor eif-2b, domain 1"/>
    <property type="match status" value="1"/>
</dbReference>
<dbReference type="Gene3D" id="3.40.50.10470">
    <property type="entry name" value="Translation initiation factor eif-2b, domain 2"/>
    <property type="match status" value="1"/>
</dbReference>
<dbReference type="HAMAP" id="MF_01678">
    <property type="entry name" value="Salvage_MtnA"/>
    <property type="match status" value="1"/>
</dbReference>
<dbReference type="InterPro" id="IPR000649">
    <property type="entry name" value="IF-2B-related"/>
</dbReference>
<dbReference type="InterPro" id="IPR005251">
    <property type="entry name" value="IF-M1Pi"/>
</dbReference>
<dbReference type="InterPro" id="IPR042529">
    <property type="entry name" value="IF_2B-like_C"/>
</dbReference>
<dbReference type="InterPro" id="IPR011559">
    <property type="entry name" value="Initiation_fac_2B_a/b/d"/>
</dbReference>
<dbReference type="InterPro" id="IPR027363">
    <property type="entry name" value="M1Pi_N"/>
</dbReference>
<dbReference type="InterPro" id="IPR037171">
    <property type="entry name" value="NagB/RpiA_transferase-like"/>
</dbReference>
<dbReference type="NCBIfam" id="TIGR00524">
    <property type="entry name" value="eIF-2B_rel"/>
    <property type="match status" value="1"/>
</dbReference>
<dbReference type="NCBIfam" id="NF004326">
    <property type="entry name" value="PRK05720.1"/>
    <property type="match status" value="1"/>
</dbReference>
<dbReference type="NCBIfam" id="TIGR00512">
    <property type="entry name" value="salvage_mtnA"/>
    <property type="match status" value="1"/>
</dbReference>
<dbReference type="PANTHER" id="PTHR43475">
    <property type="entry name" value="METHYLTHIORIBOSE-1-PHOSPHATE ISOMERASE"/>
    <property type="match status" value="1"/>
</dbReference>
<dbReference type="PANTHER" id="PTHR43475:SF1">
    <property type="entry name" value="METHYLTHIORIBOSE-1-PHOSPHATE ISOMERASE"/>
    <property type="match status" value="1"/>
</dbReference>
<dbReference type="Pfam" id="PF01008">
    <property type="entry name" value="IF-2B"/>
    <property type="match status" value="1"/>
</dbReference>
<dbReference type="SUPFAM" id="SSF100950">
    <property type="entry name" value="NagB/RpiA/CoA transferase-like"/>
    <property type="match status" value="1"/>
</dbReference>
<feature type="chain" id="PRO_0000402000" description="Methylthioribose-1-phosphate isomerase">
    <location>
        <begin position="1"/>
        <end position="375"/>
    </location>
</feature>
<feature type="active site" description="Proton donor" evidence="1">
    <location>
        <position position="257"/>
    </location>
</feature>
<feature type="site" description="Transition state stabilizer" evidence="1">
    <location>
        <position position="177"/>
    </location>
</feature>
<comment type="function">
    <text evidence="1">Catalyzes the interconversion of methylthioribose-1-phosphate (MTR-1-P) into methylthioribulose-1-phosphate (MTRu-1-P).</text>
</comment>
<comment type="catalytic activity">
    <reaction evidence="1">
        <text>5-(methylsulfanyl)-alpha-D-ribose 1-phosphate = 5-(methylsulfanyl)-D-ribulose 1-phosphate</text>
        <dbReference type="Rhea" id="RHEA:19989"/>
        <dbReference type="ChEBI" id="CHEBI:58533"/>
        <dbReference type="ChEBI" id="CHEBI:58548"/>
        <dbReference type="EC" id="5.3.1.23"/>
    </reaction>
</comment>
<comment type="pathway">
    <text evidence="1">Amino-acid biosynthesis; L-methionine biosynthesis via salvage pathway; L-methionine from S-methyl-5-thio-alpha-D-ribose 1-phosphate: step 1/6.</text>
</comment>
<comment type="subcellular location">
    <subcellularLocation>
        <location evidence="1">Cytoplasm</location>
    </subcellularLocation>
    <subcellularLocation>
        <location evidence="1">Nucleus</location>
    </subcellularLocation>
</comment>
<comment type="similarity">
    <text evidence="1">Belongs to the eIF-2B alpha/beta/delta subunits family. MtnA subfamily.</text>
</comment>
<gene>
    <name type="ORF">LinJ36.0740</name>
    <name type="ORF">LinJ_36_5160</name>
</gene>
<reference key="1">
    <citation type="journal article" date="2007" name="Nat. Genet.">
        <title>Comparative genomic analysis of three Leishmania species that cause diverse human disease.</title>
        <authorList>
            <person name="Peacock C.S."/>
            <person name="Seeger K."/>
            <person name="Harris D."/>
            <person name="Murphy L."/>
            <person name="Ruiz J.C."/>
            <person name="Quail M.A."/>
            <person name="Peters N."/>
            <person name="Adlem E."/>
            <person name="Tivey A."/>
            <person name="Aslett M."/>
            <person name="Kerhornou A."/>
            <person name="Ivens A."/>
            <person name="Fraser A."/>
            <person name="Rajandream M.-A."/>
            <person name="Carver T."/>
            <person name="Norbertczak H."/>
            <person name="Chillingworth T."/>
            <person name="Hance Z."/>
            <person name="Jagels K."/>
            <person name="Moule S."/>
            <person name="Ormond D."/>
            <person name="Rutter S."/>
            <person name="Sqaures R."/>
            <person name="Whitehead S."/>
            <person name="Rabbinowitsch E."/>
            <person name="Arrowsmith C."/>
            <person name="White B."/>
            <person name="Thurston S."/>
            <person name="Bringaud F."/>
            <person name="Baldauf S.L."/>
            <person name="Faulconbridge A."/>
            <person name="Jeffares D."/>
            <person name="Depledge D.P."/>
            <person name="Oyola S.O."/>
            <person name="Hilley J.D."/>
            <person name="Brito L.O."/>
            <person name="Tosi L.R.O."/>
            <person name="Barrell B."/>
            <person name="Cruz A.K."/>
            <person name="Mottram J.C."/>
            <person name="Smith D.F."/>
            <person name="Berriman M."/>
        </authorList>
    </citation>
    <scope>NUCLEOTIDE SEQUENCE [LARGE SCALE GENOMIC DNA]</scope>
    <source>
        <strain>JPCM5</strain>
    </source>
</reference>
<name>MTNA_LEIIN</name>
<organism>
    <name type="scientific">Leishmania infantum</name>
    <dbReference type="NCBI Taxonomy" id="5671"/>
    <lineage>
        <taxon>Eukaryota</taxon>
        <taxon>Discoba</taxon>
        <taxon>Euglenozoa</taxon>
        <taxon>Kinetoplastea</taxon>
        <taxon>Metakinetoplastina</taxon>
        <taxon>Trypanosomatida</taxon>
        <taxon>Trypanosomatidae</taxon>
        <taxon>Leishmaniinae</taxon>
        <taxon>Leishmania</taxon>
    </lineage>
</organism>
<proteinExistence type="inferred from homology"/>
<protein>
    <recommendedName>
        <fullName evidence="1">Methylthioribose-1-phosphate isomerase</fullName>
        <shortName evidence="1">M1Pi</shortName>
        <shortName evidence="1">MTR-1-P isomerase</shortName>
        <ecNumber evidence="1">5.3.1.23</ecNumber>
    </recommendedName>
    <alternativeName>
        <fullName evidence="1">S-methyl-5-thioribose-1-phosphate isomerase</fullName>
    </alternativeName>
    <alternativeName>
        <fullName evidence="1">Translation initiation factor eIF-2B subunit alpha/beta/delta-like protein</fullName>
    </alternativeName>
</protein>